<name>ROBO1_MOUSE</name>
<comment type="function">
    <text evidence="2 7 8 10 13">Receptor for SLIT1 and SLIT2 that mediates cellular responses to molecular guidance cues in cellular migration, including axonal navigation at the ventral midline of the neural tube and projection of axons to different regions during neuronal development (PubMed:10433822, PubMed:24560577). Interaction with the intracellular domain of FLRT3 mediates axon attraction towards cells expressing NTN1 (PubMed:24560577). In axon growth cones, the silencing of the attractive effect of NTN1 by SLIT2 may require the formation of a ROBO1-DCC complex (By similarity). Plays a role in the regulation of cell migration via its interaction with MYO9B; inhibits MYO9B-mediated stimulation of RHOA GTPase activity, and thereby leads to increased levels of active, GTP-bound RHOA (By similarity). May be required for lung development (PubMed:11734623).</text>
</comment>
<comment type="subunit">
    <text evidence="2 7 11 12 13">Homodimer. Dimerization is mediated by the extracellular domain and is independent of SLIT liganding (By similarity). Interacts with SLIT1 (PubMed:10433822) Interacts with SLIT2 (By similarity). Interacts with FLRT3 (PubMed:24560577). Interacts with MYO9B (via Rho-GAP domain) (By similarity).</text>
</comment>
<comment type="subcellular location">
    <subcellularLocation>
        <location evidence="13">Cell membrane</location>
        <topology evidence="16">Single-pass type I membrane protein</topology>
    </subcellularLocation>
    <subcellularLocation>
        <location evidence="13">Cell projection</location>
        <location evidence="13">Axon</location>
    </subcellularLocation>
    <subcellularLocation>
        <location evidence="1">Endoplasmic reticulum-Golgi intermediate compartment membrane</location>
        <topology evidence="1">Single-pass membrane protein</topology>
    </subcellularLocation>
    <text evidence="1 13">Detected at growth cones in thalamus neurons (PubMed:24560577). PRRG4 prevents cell surface location and both colocalize in the Endoplasmic reticulum/Golgi adjacent to the cell nucleus (By similarity).</text>
</comment>
<comment type="tissue specificity">
    <text evidence="9 10 13">Detected in embryonic thalamus neurons (at protein level) (PubMed:24560577). Expressed in embryonal spinal cord. Expressed in embryonal lung, and in adult lung bronchial epithelial cells of large proximal airways.</text>
</comment>
<comment type="developmental stage">
    <text evidence="9 10 15">Earliest and highest expression at 11 dpc. Expression is detected in developing somits, brain, neural tube, and pericardiac mesenchyme. By in situ hybridization is detected in marginal zones bordering the mitotically active periventricular region, weakly extending to the ventral aspect impinging on motor neuron columns. Also detected in the ventral third of the developing neural tube, and in spinal cord throughout the full length of the neural tube. Also detected at 17.5 dpc in lung mesenchyme. Expressed at 11.5 dpc in spinal cord, predominantly localized to postcrossing commissural axons.</text>
</comment>
<comment type="PTM">
    <text evidence="11">Ubiquitinated. May be deubiquitinated by USP33.</text>
</comment>
<comment type="disruption phenotype">
    <text evidence="8">Mice show defects in commissural axon guidance in spinal cord including midline recrossing and an altered lateral and ventral funiculi projection. The phenotype resembles that of a SLIT1;SLIT2;SLIT3 triple mutant. They also mimick a naturally occurring human homozygous deletion mutant detected in a small lung cancer cell line, frequently die at birth by respiratory failure with accompanying abnormal lung histology. Surviving mice develop bronchial hyperplasia.</text>
</comment>
<comment type="similarity">
    <text evidence="16">Belongs to the immunoglobulin superfamily. ROBO family.</text>
</comment>
<gene>
    <name type="primary">Robo1</name>
    <name type="synonym">Dutt1</name>
</gene>
<evidence type="ECO:0000250" key="1">
    <source>
        <dbReference type="UniProtKB" id="O55005"/>
    </source>
</evidence>
<evidence type="ECO:0000250" key="2">
    <source>
        <dbReference type="UniProtKB" id="Q9Y6N7"/>
    </source>
</evidence>
<evidence type="ECO:0000255" key="3"/>
<evidence type="ECO:0000255" key="4">
    <source>
        <dbReference type="PROSITE-ProRule" id="PRU00114"/>
    </source>
</evidence>
<evidence type="ECO:0000255" key="5">
    <source>
        <dbReference type="PROSITE-ProRule" id="PRU00316"/>
    </source>
</evidence>
<evidence type="ECO:0000256" key="6">
    <source>
        <dbReference type="SAM" id="MobiDB-lite"/>
    </source>
</evidence>
<evidence type="ECO:0000269" key="7">
    <source>
    </source>
</evidence>
<evidence type="ECO:0000269" key="8">
    <source>
    </source>
</evidence>
<evidence type="ECO:0000269" key="9">
    <source>
    </source>
</evidence>
<evidence type="ECO:0000269" key="10">
    <source>
    </source>
</evidence>
<evidence type="ECO:0000269" key="11">
    <source>
    </source>
</evidence>
<evidence type="ECO:0000269" key="12">
    <source>
    </source>
</evidence>
<evidence type="ECO:0000269" key="13">
    <source>
    </source>
</evidence>
<evidence type="ECO:0000269" key="14">
    <source>
    </source>
</evidence>
<evidence type="ECO:0000269" key="15">
    <source>
    </source>
</evidence>
<evidence type="ECO:0000305" key="16"/>
<protein>
    <recommendedName>
        <fullName>Roundabout homolog 1</fullName>
    </recommendedName>
</protein>
<sequence length="1612" mass="176407">MIAEPAHFYLFGLICLCSGSRLRQEDFPPRIVEHPSDLIVSKGEPATLNCKAEGRPTPTIEWYKGGERVETDKDDPRSHRMLLPSGSLFFLRIVHGRKSRPDEGVYICVARNYLGEAVSHNASLEVAILRDDFRQNPSDVMVAVGEPAVMECQPPRGHPEPTISWKKDGSPLDDKDERITIRGGKLMITYTRKSDAGKYVCVGTNMVGERESEVAELTVLERPSFVKRPSNLAVTVDDSAEFKCEARGDPVPTVRWRKDDGELPKSRYEIRDDHTLKIRKVTAGDMGSYTCVAENMVGKAEASATLTVQEPPHFVVKPRDQVVALGRTVTFQCEATGNPQPAIFWRREGSQNLLFSYQPPQSSSRFSVSQTGDLTITNVQRSDVGYYICQTLNVAGSIITKAYLEVTDVIADRPPPVIRQGPVNQTVAVDGTLILSCVATGSPAPTILWRKDGVLVSTQDSRIKQLESGVLQIRYAKLGDTGRYTCTASTPSGEATWSAYIEVQEFGVPVQPPRPTDPNLIPSAPSKPEVTDVSKNTVTLSWQPNLNSGATPTSYIIEAFSHASGSSWQTAAENVKTETFAIKGLKPNAIYLFLVRAANAYGISDPSQISDPVKTQDVPPTSQGVDHKQVQRELGNVVLHLHNPTILSSSSVEVHWTVDQQSQYIQGYKILYRPSGASHGESEWLVFEVRTPTKNSVVIPDLRKGVNYEIKARPFFNEFQGADSEIKFAKTLEEAPSAPPRSVTVSKNDGNGTAILVTWQPPPEDTQNGMVQEYKVWCLGNETKYHINKTVDGSTFSVVIPSLVPGIRYSVEVAASTGAGPGVKSEPQFIQLDSHGNPVSPEDQVSLAQQISDVVRQPAFIAGIGAACWIILMVFSIWLYRHRKKRNGLTSTYAGIRKVPSFTFTPTVTYQRGGEAVSSGGRPGLLNISEPATQPWLADTWPNTGNNHNDCSINCCTAGNGNSDSNLTTYSRPADCIANYNNQLDNKQTNLMLPESTVYGDVDLSNKINEMKTFNSPNLKDGRFVNPSGQPTPYATTQLIQANLSNNMNNGAGDSSEKHWKPPGQQKPEVAPIQYNIMEQNKLNKDYRANDTIPPTIPYNQSYDQNTGGSYNSSDRGSSTSGSQGHKKGARTPKAPKQGGMNWADLLPPPPAHPPPHSNSEEYNMSVDESYDQEMPCPVPPAPMYLQQDELQEEEDERGPTPPVRGAASSPAAVSYSHQSTATLTPSPQEELQPMLQDCPEDLGHMPHPPDRRRQPVSPPPPPRPISPPHTYGYISGPLVSDMDTDAPEEEEDEADMEVAKMQTRRLLLRGLEQTPASSVGDLESSVTGSMINGWGSASEEDNISSGRSSVSSSDGSFFTDADFAQAVAAAAEYAGLKVARRQMQDAAGRRHFHASQCPRPTSPVSTDSNMSAVVIQKARPAKKQKHQPGHLRREAYADDLPPPPVPPPAIKSPTVQSKAQLEVRPVMVPKLASIEARTDRSSDRKGGSYKGREALDGRQVTDLRTNPSDPREAQEQPNDGKGRGTRQPKRDLPPAKTHLGQEDILPYCRPTFPTSNNPRDPSSSSSMSSRGSGSRQREQANVGRRNMAEMQVLGGFERGDENNEELEETES</sequence>
<dbReference type="EMBL" id="Y17793">
    <property type="protein sequence ID" value="CAA76850.1"/>
    <property type="molecule type" value="mRNA"/>
</dbReference>
<dbReference type="CCDS" id="CCDS37376.1"/>
<dbReference type="PIR" id="T30805">
    <property type="entry name" value="T30805"/>
</dbReference>
<dbReference type="RefSeq" id="NP_062286.2">
    <property type="nucleotide sequence ID" value="NM_019413.2"/>
</dbReference>
<dbReference type="SMR" id="O89026"/>
<dbReference type="BioGRID" id="202949">
    <property type="interactions" value="8"/>
</dbReference>
<dbReference type="FunCoup" id="O89026">
    <property type="interactions" value="727"/>
</dbReference>
<dbReference type="STRING" id="10090.ENSMUSP00000023600"/>
<dbReference type="GlyConnect" id="2687">
    <property type="glycosylation" value="1 N-Linked glycan (1 site)"/>
</dbReference>
<dbReference type="GlyCosmos" id="O89026">
    <property type="glycosylation" value="5 sites, 1 glycan"/>
</dbReference>
<dbReference type="GlyGen" id="O89026">
    <property type="glycosylation" value="7 sites, 4 N-linked glycans (4 sites)"/>
</dbReference>
<dbReference type="iPTMnet" id="O89026"/>
<dbReference type="PhosphoSitePlus" id="O89026"/>
<dbReference type="PaxDb" id="10090-ENSMUSP00000023600"/>
<dbReference type="ProteomicsDB" id="260915"/>
<dbReference type="DNASU" id="19876"/>
<dbReference type="GeneID" id="19876"/>
<dbReference type="KEGG" id="mmu:19876"/>
<dbReference type="AGR" id="MGI:1274781"/>
<dbReference type="CTD" id="6091"/>
<dbReference type="MGI" id="MGI:1274781">
    <property type="gene designation" value="Robo1"/>
</dbReference>
<dbReference type="eggNOG" id="KOG4222">
    <property type="taxonomic scope" value="Eukaryota"/>
</dbReference>
<dbReference type="InParanoid" id="O89026"/>
<dbReference type="PhylomeDB" id="O89026"/>
<dbReference type="Reactome" id="R-MMU-376176">
    <property type="pathway name" value="Signaling by ROBO receptors"/>
</dbReference>
<dbReference type="Reactome" id="R-MMU-428890">
    <property type="pathway name" value="Role of ABL in ROBO-SLIT signaling"/>
</dbReference>
<dbReference type="Reactome" id="R-MMU-8985586">
    <property type="pathway name" value="SLIT2:ROBO1 increases RHOA activity"/>
</dbReference>
<dbReference type="Reactome" id="R-MMU-9010553">
    <property type="pathway name" value="Regulation of expression of SLITs and ROBOs"/>
</dbReference>
<dbReference type="BioGRID-ORCS" id="19876">
    <property type="hits" value="2 hits in 79 CRISPR screens"/>
</dbReference>
<dbReference type="ChiTaRS" id="Robo1">
    <property type="organism name" value="mouse"/>
</dbReference>
<dbReference type="PRO" id="PR:O89026"/>
<dbReference type="Proteomes" id="UP000000589">
    <property type="component" value="Unplaced"/>
</dbReference>
<dbReference type="RNAct" id="O89026">
    <property type="molecule type" value="protein"/>
</dbReference>
<dbReference type="GO" id="GO:0030673">
    <property type="term" value="C:axolemma"/>
    <property type="evidence" value="ECO:0000314"/>
    <property type="project" value="MGI"/>
</dbReference>
<dbReference type="GO" id="GO:0033116">
    <property type="term" value="C:endoplasmic reticulum-Golgi intermediate compartment membrane"/>
    <property type="evidence" value="ECO:0007669"/>
    <property type="project" value="UniProtKB-SubCell"/>
</dbReference>
<dbReference type="GO" id="GO:0005886">
    <property type="term" value="C:plasma membrane"/>
    <property type="evidence" value="ECO:0000304"/>
    <property type="project" value="Reactome"/>
</dbReference>
<dbReference type="GO" id="GO:0008046">
    <property type="term" value="F:axon guidance receptor activity"/>
    <property type="evidence" value="ECO:0007669"/>
    <property type="project" value="InterPro"/>
</dbReference>
<dbReference type="GO" id="GO:0035904">
    <property type="term" value="P:aorta development"/>
    <property type="evidence" value="ECO:0000316"/>
    <property type="project" value="BHF-UCL"/>
</dbReference>
<dbReference type="GO" id="GO:0003180">
    <property type="term" value="P:aortic valve morphogenesis"/>
    <property type="evidence" value="ECO:0000316"/>
    <property type="project" value="BHF-UCL"/>
</dbReference>
<dbReference type="GO" id="GO:0007411">
    <property type="term" value="P:axon guidance"/>
    <property type="evidence" value="ECO:0000315"/>
    <property type="project" value="MGI"/>
</dbReference>
<dbReference type="GO" id="GO:0016199">
    <property type="term" value="P:axon midline choice point recognition"/>
    <property type="evidence" value="ECO:0000316"/>
    <property type="project" value="UniProtKB"/>
</dbReference>
<dbReference type="GO" id="GO:0006935">
    <property type="term" value="P:chemotaxis"/>
    <property type="evidence" value="ECO:0007669"/>
    <property type="project" value="UniProtKB-KW"/>
</dbReference>
<dbReference type="GO" id="GO:0060976">
    <property type="term" value="P:coronary vasculature development"/>
    <property type="evidence" value="ECO:0000315"/>
    <property type="project" value="MGI"/>
</dbReference>
<dbReference type="GO" id="GO:0003272">
    <property type="term" value="P:endocardial cushion formation"/>
    <property type="evidence" value="ECO:0000316"/>
    <property type="project" value="BHF-UCL"/>
</dbReference>
<dbReference type="GO" id="GO:0007507">
    <property type="term" value="P:heart development"/>
    <property type="evidence" value="ECO:0000315"/>
    <property type="project" value="MGI"/>
</dbReference>
<dbReference type="GO" id="GO:0003129">
    <property type="term" value="P:heart induction"/>
    <property type="evidence" value="ECO:0000314"/>
    <property type="project" value="BHF-UCL"/>
</dbReference>
<dbReference type="GO" id="GO:0001822">
    <property type="term" value="P:kidney development"/>
    <property type="evidence" value="ECO:0000315"/>
    <property type="project" value="MGI"/>
</dbReference>
<dbReference type="GO" id="GO:0060763">
    <property type="term" value="P:mammary duct terminal end bud growth"/>
    <property type="evidence" value="ECO:0000315"/>
    <property type="project" value="MGI"/>
</dbReference>
<dbReference type="GO" id="GO:0030336">
    <property type="term" value="P:negative regulation of cell migration"/>
    <property type="evidence" value="ECO:0000250"/>
    <property type="project" value="UniProtKB"/>
</dbReference>
<dbReference type="GO" id="GO:0008285">
    <property type="term" value="P:negative regulation of cell population proliferation"/>
    <property type="evidence" value="ECO:0000315"/>
    <property type="project" value="MGI"/>
</dbReference>
<dbReference type="GO" id="GO:0010629">
    <property type="term" value="P:negative regulation of gene expression"/>
    <property type="evidence" value="ECO:0000314"/>
    <property type="project" value="BHF-UCL"/>
</dbReference>
<dbReference type="GO" id="GO:0021891">
    <property type="term" value="P:olfactory bulb interneuron development"/>
    <property type="evidence" value="ECO:0000316"/>
    <property type="project" value="UniProtKB"/>
</dbReference>
<dbReference type="GO" id="GO:0003148">
    <property type="term" value="P:outflow tract septum morphogenesis"/>
    <property type="evidence" value="ECO:0000316"/>
    <property type="project" value="BHF-UCL"/>
</dbReference>
<dbReference type="GO" id="GO:0010628">
    <property type="term" value="P:positive regulation of gene expression"/>
    <property type="evidence" value="ECO:0000314"/>
    <property type="project" value="BHF-UCL"/>
</dbReference>
<dbReference type="GO" id="GO:0045747">
    <property type="term" value="P:positive regulation of Notch signaling pathway"/>
    <property type="evidence" value="ECO:0000314"/>
    <property type="project" value="BHF-UCL"/>
</dbReference>
<dbReference type="GO" id="GO:0035025">
    <property type="term" value="P:positive regulation of Rho protein signal transduction"/>
    <property type="evidence" value="ECO:0000250"/>
    <property type="project" value="UniProtKB"/>
</dbReference>
<dbReference type="GO" id="GO:0003184">
    <property type="term" value="P:pulmonary valve morphogenesis"/>
    <property type="evidence" value="ECO:0000316"/>
    <property type="project" value="BHF-UCL"/>
</dbReference>
<dbReference type="GO" id="GO:0035385">
    <property type="term" value="P:Roundabout signaling pathway"/>
    <property type="evidence" value="ECO:0000250"/>
    <property type="project" value="UniProtKB"/>
</dbReference>
<dbReference type="GO" id="GO:0003281">
    <property type="term" value="P:ventricular septum development"/>
    <property type="evidence" value="ECO:0000315"/>
    <property type="project" value="MGI"/>
</dbReference>
<dbReference type="GO" id="GO:0060412">
    <property type="term" value="P:ventricular septum morphogenesis"/>
    <property type="evidence" value="ECO:0000316"/>
    <property type="project" value="BHF-UCL"/>
</dbReference>
<dbReference type="CDD" id="cd00063">
    <property type="entry name" value="FN3"/>
    <property type="match status" value="3"/>
</dbReference>
<dbReference type="CDD" id="cd07693">
    <property type="entry name" value="IgC_1_Robo"/>
    <property type="match status" value="1"/>
</dbReference>
<dbReference type="CDD" id="cd05724">
    <property type="entry name" value="IgI_2_Robo"/>
    <property type="match status" value="1"/>
</dbReference>
<dbReference type="CDD" id="cd05725">
    <property type="entry name" value="IgI_3_Robo"/>
    <property type="match status" value="1"/>
</dbReference>
<dbReference type="CDD" id="cd05726">
    <property type="entry name" value="IgI_4_Robo"/>
    <property type="match status" value="1"/>
</dbReference>
<dbReference type="CDD" id="cd20952">
    <property type="entry name" value="IgI_5_Robo"/>
    <property type="match status" value="1"/>
</dbReference>
<dbReference type="FunFam" id="2.60.40.10:FF:000053">
    <property type="entry name" value="Roundabout guidance receptor 1"/>
    <property type="match status" value="1"/>
</dbReference>
<dbReference type="FunFam" id="2.60.40.10:FF:000055">
    <property type="entry name" value="roundabout homolog 1 isoform X2"/>
    <property type="match status" value="1"/>
</dbReference>
<dbReference type="FunFam" id="2.60.40.10:FF:000065">
    <property type="entry name" value="roundabout homolog 1 isoform X3"/>
    <property type="match status" value="1"/>
</dbReference>
<dbReference type="FunFam" id="2.60.40.10:FF:000026">
    <property type="entry name" value="roundabout homolog 2 isoform X1"/>
    <property type="match status" value="1"/>
</dbReference>
<dbReference type="FunFam" id="2.60.40.10:FF:000008">
    <property type="entry name" value="roundabout homolog 2 isoform X2"/>
    <property type="match status" value="2"/>
</dbReference>
<dbReference type="FunFam" id="2.60.40.10:FF:000043">
    <property type="entry name" value="roundabout homolog 2 isoform X2"/>
    <property type="match status" value="1"/>
</dbReference>
<dbReference type="FunFam" id="2.60.40.10:FF:000058">
    <property type="entry name" value="roundabout homolog 2 isoform X3"/>
    <property type="match status" value="1"/>
</dbReference>
<dbReference type="Gene3D" id="2.60.40.10">
    <property type="entry name" value="Immunoglobulins"/>
    <property type="match status" value="8"/>
</dbReference>
<dbReference type="InterPro" id="IPR003961">
    <property type="entry name" value="FN3_dom"/>
</dbReference>
<dbReference type="InterPro" id="IPR036116">
    <property type="entry name" value="FN3_sf"/>
</dbReference>
<dbReference type="InterPro" id="IPR007110">
    <property type="entry name" value="Ig-like_dom"/>
</dbReference>
<dbReference type="InterPro" id="IPR036179">
    <property type="entry name" value="Ig-like_dom_sf"/>
</dbReference>
<dbReference type="InterPro" id="IPR013783">
    <property type="entry name" value="Ig-like_fold"/>
</dbReference>
<dbReference type="InterPro" id="IPR013098">
    <property type="entry name" value="Ig_I-set"/>
</dbReference>
<dbReference type="InterPro" id="IPR003599">
    <property type="entry name" value="Ig_sub"/>
</dbReference>
<dbReference type="InterPro" id="IPR003598">
    <property type="entry name" value="Ig_sub2"/>
</dbReference>
<dbReference type="InterPro" id="IPR013106">
    <property type="entry name" value="Ig_V-set"/>
</dbReference>
<dbReference type="InterPro" id="IPR051170">
    <property type="entry name" value="Neural/epithelial_adhesion"/>
</dbReference>
<dbReference type="InterPro" id="IPR032986">
    <property type="entry name" value="Robo1_Ig-like3"/>
</dbReference>
<dbReference type="PANTHER" id="PTHR12231">
    <property type="entry name" value="CTX-RELATED TYPE I TRANSMEMBRANE PROTEIN"/>
    <property type="match status" value="1"/>
</dbReference>
<dbReference type="PANTHER" id="PTHR12231:SF243">
    <property type="entry name" value="ROUNDABOUT HOMOLOG 1"/>
    <property type="match status" value="1"/>
</dbReference>
<dbReference type="Pfam" id="PF00041">
    <property type="entry name" value="fn3"/>
    <property type="match status" value="3"/>
</dbReference>
<dbReference type="Pfam" id="PF07679">
    <property type="entry name" value="I-set"/>
    <property type="match status" value="2"/>
</dbReference>
<dbReference type="Pfam" id="PF13927">
    <property type="entry name" value="Ig_3"/>
    <property type="match status" value="3"/>
</dbReference>
<dbReference type="SMART" id="SM00060">
    <property type="entry name" value="FN3"/>
    <property type="match status" value="3"/>
</dbReference>
<dbReference type="SMART" id="SM00409">
    <property type="entry name" value="IG"/>
    <property type="match status" value="5"/>
</dbReference>
<dbReference type="SMART" id="SM00408">
    <property type="entry name" value="IGc2"/>
    <property type="match status" value="5"/>
</dbReference>
<dbReference type="SMART" id="SM00406">
    <property type="entry name" value="IGv"/>
    <property type="match status" value="3"/>
</dbReference>
<dbReference type="SUPFAM" id="SSF49265">
    <property type="entry name" value="Fibronectin type III"/>
    <property type="match status" value="2"/>
</dbReference>
<dbReference type="SUPFAM" id="SSF48726">
    <property type="entry name" value="Immunoglobulin"/>
    <property type="match status" value="5"/>
</dbReference>
<dbReference type="PROSITE" id="PS50853">
    <property type="entry name" value="FN3"/>
    <property type="match status" value="3"/>
</dbReference>
<dbReference type="PROSITE" id="PS50835">
    <property type="entry name" value="IG_LIKE"/>
    <property type="match status" value="5"/>
</dbReference>
<accession>O89026</accession>
<reference key="1">
    <citation type="submission" date="1998-07" db="EMBL/GenBank/DDBJ databases">
        <title>The mouse homologue of human DUTT1/H-robo1 gene: protein sequence and chromosomal location.</title>
        <authorList>
            <person name="Wu M.C."/>
            <person name="Lowe N."/>
            <person name="Fordham R."/>
            <person name="Rabbitts P."/>
        </authorList>
    </citation>
    <scope>NUCLEOTIDE SEQUENCE [MRNA]</scope>
    <source>
        <tissue>Brain</tissue>
    </source>
</reference>
<reference key="2">
    <citation type="journal article" date="2001" name="Proc. Natl. Acad. Sci. U.S.A.">
        <title>Inadequate lung development and bronchial hyperplasia in mice with a targeted deletion in the Dutt1/Robo1 gene.</title>
        <authorList>
            <person name="Xian J."/>
            <person name="Clark K.J."/>
            <person name="Fordham R."/>
            <person name="Pannell R."/>
            <person name="Rabbitts T.H."/>
            <person name="Rabbitts P.H."/>
        </authorList>
    </citation>
    <scope>POSSIBLE FUNCTION</scope>
    <scope>DISRUPTION PHENOTYPE</scope>
</reference>
<reference key="3">
    <citation type="journal article" date="2004" name="Neuron">
        <title>Conserved roles for slit and robo proteins in midline commissural axon guidance.</title>
        <authorList>
            <person name="Long H."/>
            <person name="Sabatier C."/>
            <person name="Ma L."/>
            <person name="Plump A."/>
            <person name="Yuan W."/>
            <person name="Ornitz D.M."/>
            <person name="Tamada A."/>
            <person name="Murakami F."/>
            <person name="Goodman C.S."/>
            <person name="Tessier-Lavigne M."/>
        </authorList>
    </citation>
    <scope>FUNCTION</scope>
    <scope>TISSUE SPECIFICITY</scope>
    <scope>DEVELOPMENTAL STAGE</scope>
</reference>
<reference key="4">
    <citation type="journal article" date="1998" name="Mol. Cell. Neurosci.">
        <title>The DUTT1 gene, a novel NCAM family member is expressed in developing murine neural tissues and has an unusually broad pattern of expression.</title>
        <authorList>
            <person name="Sundaresan V."/>
            <person name="Roberts I."/>
            <person name="Bateman A."/>
            <person name="Bankier A."/>
            <person name="Sheppard M."/>
            <person name="Hobbs C."/>
            <person name="Xiong J."/>
            <person name="Minna J."/>
            <person name="Latif F."/>
            <person name="Lerman M."/>
            <person name="Rabbitts P."/>
        </authorList>
    </citation>
    <scope>DEVELOPMENTAL STAGE</scope>
</reference>
<reference key="5">
    <citation type="journal article" date="1999" name="Dev. Biol.">
        <title>The mouse SLIT family: secreted ligands for ROBO expressed in patterns that suggest a role in morphogenesis and axon guidance.</title>
        <authorList>
            <person name="Yuan W."/>
            <person name="Zhou L."/>
            <person name="Chen J.H."/>
            <person name="Wu J.Y."/>
            <person name="Rao Y."/>
            <person name="Ornitz D.M."/>
        </authorList>
    </citation>
    <scope>INTERACTION WITH SLIT1</scope>
</reference>
<reference key="6">
    <citation type="journal article" date="2002" name="FEBS Lett.">
        <title>Temporal and spatial expression of two isoforms of the Dutt1/Robo1 gene in mouse development.</title>
        <authorList>
            <person name="Clark K."/>
            <person name="Hammond E."/>
            <person name="Rabbitts P."/>
        </authorList>
    </citation>
    <scope>TISSUE SPECIFICITY</scope>
    <scope>DEVELOPMENTAL STAGE</scope>
</reference>
<reference key="7">
    <citation type="journal article" date="2009" name="Nat. Neurosci.">
        <title>Midline crossing and Slit responsiveness of commissural axons require USP33.</title>
        <authorList>
            <person name="Yuasa-Kawada J."/>
            <person name="Kinoshita-Kawada M."/>
            <person name="Wu G."/>
            <person name="Rao Y."/>
            <person name="Wu J.Y."/>
        </authorList>
    </citation>
    <scope>UBIQUITINATION</scope>
    <scope>INTERACTION WITH USP33</scope>
</reference>
<reference key="8">
    <citation type="journal article" date="2009" name="Proc. Natl. Acad. Sci. U.S.A.">
        <title>Deubiquitinating enzyme USP33/VDU1 is required for Slit signaling in inhibiting breast cancer cell migration.</title>
        <authorList>
            <person name="Yuasa-Kawada J."/>
            <person name="Kinoshita-Kawada M."/>
            <person name="Rao Y."/>
            <person name="Wu J.Y."/>
        </authorList>
    </citation>
    <scope>INTERACTION WITH USP33</scope>
</reference>
<reference key="9">
    <citation type="journal article" date="2010" name="Cell">
        <title>A tissue-specific atlas of mouse protein phosphorylation and expression.</title>
        <authorList>
            <person name="Huttlin E.L."/>
            <person name="Jedrychowski M.P."/>
            <person name="Elias J.E."/>
            <person name="Goswami T."/>
            <person name="Rad R."/>
            <person name="Beausoleil S.A."/>
            <person name="Villen J."/>
            <person name="Haas W."/>
            <person name="Sowa M.E."/>
            <person name="Gygi S.P."/>
        </authorList>
    </citation>
    <scope>IDENTIFICATION BY MASS SPECTROMETRY [LARGE SCALE ANALYSIS]</scope>
    <source>
        <tissue>Brain</tissue>
        <tissue>Kidney</tissue>
        <tissue>Lung</tissue>
    </source>
</reference>
<reference key="10">
    <citation type="journal article" date="2014" name="Curr. Biol.">
        <title>FLRT3 is a Robo1-interacting protein that determines Netrin-1 attraction in developing axons.</title>
        <authorList>
            <person name="Leyva-Diaz E."/>
            <person name="del Toro D."/>
            <person name="Menal M.J."/>
            <person name="Cambray S."/>
            <person name="Susin R."/>
            <person name="Tessier-Lavigne M."/>
            <person name="Klein R."/>
            <person name="Egea J."/>
            <person name="Lopez-Bendito G."/>
        </authorList>
    </citation>
    <scope>INTERACTION WITH FLRT3</scope>
    <scope>TISSUE SPECIFICITY</scope>
    <scope>SUBCELLULAR LOCATION</scope>
    <scope>FUNCTION</scope>
</reference>
<reference key="11">
    <citation type="journal article" date="2022" name="Kidney Int.">
        <title>Biallelic pathogenic variants in roundabout guidance receptor 1 associate with syndromic congenital anomalies of the kidney and urinary tract.</title>
        <authorList>
            <consortium name="Genomics England Research Consortium"/>
            <person name="Muench J."/>
            <person name="Engesser M."/>
            <person name="Schoenauer R."/>
            <person name="Hamm J.A."/>
            <person name="Hartig C."/>
            <person name="Hantmann E."/>
            <person name="Akay G."/>
            <person name="Pehlivan D."/>
            <person name="Mitani T."/>
            <person name="Coban Akdemir Z."/>
            <person name="Tueysuez B."/>
            <person name="Shirakawa T."/>
            <person name="Dateki S."/>
            <person name="Claus L.R."/>
            <person name="van Eerde A.M."/>
            <person name="Smol T."/>
            <person name="Devisme L."/>
            <person name="Franquet H."/>
            <person name="Attie-Bitach T."/>
            <person name="Wagner T."/>
            <person name="Bergmann C."/>
            <person name="Hoehn A.K."/>
            <person name="Shril S."/>
            <person name="Pollack A."/>
            <person name="Wenger T."/>
            <person name="Scott A.A."/>
            <person name="Paolucci S."/>
            <person name="Buchan J."/>
            <person name="Gabriel G.C."/>
            <person name="Posey J.E."/>
            <person name="Lupski J.R."/>
            <person name="Petit F."/>
            <person name="McCarthy A.A."/>
            <person name="Pazour G.J."/>
            <person name="Lo C.W."/>
            <person name="Popp B."/>
            <person name="Halbritter J."/>
        </authorList>
    </citation>
    <scope>MUTAGENESIS OF ILE-270</scope>
</reference>
<feature type="signal peptide" evidence="3">
    <location>
        <begin position="1"/>
        <end position="19"/>
    </location>
</feature>
<feature type="chain" id="PRO_0000031034" description="Roundabout homolog 1">
    <location>
        <begin position="20"/>
        <end position="1612"/>
    </location>
</feature>
<feature type="topological domain" description="Extracellular" evidence="3">
    <location>
        <begin position="20"/>
        <end position="858"/>
    </location>
</feature>
<feature type="transmembrane region" description="Helical" evidence="3">
    <location>
        <begin position="859"/>
        <end position="879"/>
    </location>
</feature>
<feature type="topological domain" description="Cytoplasmic" evidence="3">
    <location>
        <begin position="880"/>
        <end position="1612"/>
    </location>
</feature>
<feature type="domain" description="Ig-like C2-type 1">
    <location>
        <begin position="29"/>
        <end position="125"/>
    </location>
</feature>
<feature type="domain" description="Ig-like C2-type 2">
    <location>
        <begin position="131"/>
        <end position="218"/>
    </location>
</feature>
<feature type="domain" description="Ig-like C2-type 3">
    <location>
        <begin position="223"/>
        <end position="307"/>
    </location>
</feature>
<feature type="domain" description="Ig-like C2-type 4">
    <location>
        <begin position="312"/>
        <end position="407"/>
    </location>
</feature>
<feature type="domain" description="Ig-like C2-type 5">
    <location>
        <begin position="416"/>
        <end position="502"/>
    </location>
</feature>
<feature type="domain" description="Fibronectin type-III 1" evidence="5">
    <location>
        <begin position="524"/>
        <end position="618"/>
    </location>
</feature>
<feature type="domain" description="Fibronectin type-III 2" evidence="5">
    <location>
        <begin position="637"/>
        <end position="734"/>
    </location>
</feature>
<feature type="domain" description="Fibronectin type-III 3" evidence="5">
    <location>
        <begin position="739"/>
        <end position="835"/>
    </location>
</feature>
<feature type="region of interest" description="Disordered" evidence="6">
    <location>
        <begin position="1045"/>
        <end position="1068"/>
    </location>
</feature>
<feature type="region of interest" description="Disordered" evidence="6">
    <location>
        <begin position="1088"/>
        <end position="1298"/>
    </location>
</feature>
<feature type="region of interest" description="Disordered" evidence="6">
    <location>
        <begin position="1313"/>
        <end position="1358"/>
    </location>
</feature>
<feature type="region of interest" description="Disordered" evidence="6">
    <location>
        <begin position="1381"/>
        <end position="1612"/>
    </location>
</feature>
<feature type="compositionally biased region" description="Polar residues" evidence="6">
    <location>
        <begin position="1098"/>
        <end position="1107"/>
    </location>
</feature>
<feature type="compositionally biased region" description="Low complexity" evidence="6">
    <location>
        <begin position="1108"/>
        <end position="1124"/>
    </location>
</feature>
<feature type="compositionally biased region" description="Pro residues" evidence="6">
    <location>
        <begin position="1147"/>
        <end position="1157"/>
    </location>
</feature>
<feature type="compositionally biased region" description="Polar residues" evidence="6">
    <location>
        <begin position="1216"/>
        <end position="1230"/>
    </location>
</feature>
<feature type="compositionally biased region" description="Basic and acidic residues" evidence="6">
    <location>
        <begin position="1242"/>
        <end position="1254"/>
    </location>
</feature>
<feature type="compositionally biased region" description="Pro residues" evidence="6">
    <location>
        <begin position="1257"/>
        <end position="1268"/>
    </location>
</feature>
<feature type="compositionally biased region" description="Acidic residues" evidence="6">
    <location>
        <begin position="1283"/>
        <end position="1297"/>
    </location>
</feature>
<feature type="compositionally biased region" description="Low complexity" evidence="6">
    <location>
        <begin position="1345"/>
        <end position="1358"/>
    </location>
</feature>
<feature type="compositionally biased region" description="Polar residues" evidence="6">
    <location>
        <begin position="1399"/>
        <end position="1412"/>
    </location>
</feature>
<feature type="compositionally biased region" description="Basic residues" evidence="6">
    <location>
        <begin position="1420"/>
        <end position="1431"/>
    </location>
</feature>
<feature type="compositionally biased region" description="Pro residues" evidence="6">
    <location>
        <begin position="1441"/>
        <end position="1451"/>
    </location>
</feature>
<feature type="compositionally biased region" description="Basic and acidic residues" evidence="6">
    <location>
        <begin position="1477"/>
        <end position="1502"/>
    </location>
</feature>
<feature type="compositionally biased region" description="Basic and acidic residues" evidence="6">
    <location>
        <begin position="1510"/>
        <end position="1534"/>
    </location>
</feature>
<feature type="compositionally biased region" description="Polar residues" evidence="6">
    <location>
        <begin position="1553"/>
        <end position="1562"/>
    </location>
</feature>
<feature type="compositionally biased region" description="Low complexity" evidence="6">
    <location>
        <begin position="1563"/>
        <end position="1575"/>
    </location>
</feature>
<feature type="compositionally biased region" description="Acidic residues" evidence="6">
    <location>
        <begin position="1603"/>
        <end position="1612"/>
    </location>
</feature>
<feature type="modified residue" description="Phosphoserine" evidence="2">
    <location>
        <position position="901"/>
    </location>
</feature>
<feature type="modified residue" description="Phosphothreonine" evidence="2">
    <location>
        <position position="909"/>
    </location>
</feature>
<feature type="modified residue" description="Phosphotyrosine" evidence="2">
    <location>
        <position position="999"/>
    </location>
</feature>
<feature type="modified residue" description="Phosphoserine" evidence="2">
    <location>
        <position position="1016"/>
    </location>
</feature>
<feature type="modified residue" description="Phosphotyrosine" evidence="2">
    <location>
        <position position="1034"/>
    </location>
</feature>
<feature type="modified residue" description="Phosphotyrosine" evidence="2">
    <location>
        <position position="1075"/>
    </location>
</feature>
<feature type="modified residue" description="Phosphothreonine" evidence="2">
    <location>
        <position position="1201"/>
    </location>
</feature>
<feature type="modified residue" description="Phosphoserine" evidence="2">
    <location>
        <position position="1258"/>
    </location>
</feature>
<feature type="glycosylation site" description="N-linked (GlcNAc...) asparagine" evidence="3">
    <location>
        <position position="121"/>
    </location>
</feature>
<feature type="glycosylation site" description="N-linked (GlcNAc...) asparagine" evidence="3">
    <location>
        <position position="424"/>
    </location>
</feature>
<feature type="glycosylation site" description="N-linked (GlcNAc...) asparagine" evidence="3">
    <location>
        <position position="751"/>
    </location>
</feature>
<feature type="glycosylation site" description="N-linked (GlcNAc...) asparagine" evidence="3">
    <location>
        <position position="781"/>
    </location>
</feature>
<feature type="glycosylation site" description="N-linked (GlcNAc...) asparagine" evidence="3">
    <location>
        <position position="788"/>
    </location>
</feature>
<feature type="disulfide bond" evidence="4">
    <location>
        <begin position="50"/>
        <end position="108"/>
    </location>
</feature>
<feature type="disulfide bond" evidence="4">
    <location>
        <begin position="152"/>
        <end position="201"/>
    </location>
</feature>
<feature type="disulfide bond" evidence="4">
    <location>
        <begin position="244"/>
        <end position="291"/>
    </location>
</feature>
<feature type="disulfide bond" evidence="4">
    <location>
        <begin position="333"/>
        <end position="389"/>
    </location>
</feature>
<feature type="disulfide bond" evidence="4">
    <location>
        <begin position="437"/>
        <end position="486"/>
    </location>
</feature>
<feature type="mutagenesis site" description="Loss of expression in the kidney of homozygous mice. Mutant mice have severe urogenital defects, congenital heart defects and craniofacial abnormalities." evidence="14">
    <original>I</original>
    <variation>T</variation>
    <location>
        <position position="270"/>
    </location>
</feature>
<organism>
    <name type="scientific">Mus musculus</name>
    <name type="common">Mouse</name>
    <dbReference type="NCBI Taxonomy" id="10090"/>
    <lineage>
        <taxon>Eukaryota</taxon>
        <taxon>Metazoa</taxon>
        <taxon>Chordata</taxon>
        <taxon>Craniata</taxon>
        <taxon>Vertebrata</taxon>
        <taxon>Euteleostomi</taxon>
        <taxon>Mammalia</taxon>
        <taxon>Eutheria</taxon>
        <taxon>Euarchontoglires</taxon>
        <taxon>Glires</taxon>
        <taxon>Rodentia</taxon>
        <taxon>Myomorpha</taxon>
        <taxon>Muroidea</taxon>
        <taxon>Muridae</taxon>
        <taxon>Murinae</taxon>
        <taxon>Mus</taxon>
        <taxon>Mus</taxon>
    </lineage>
</organism>
<proteinExistence type="evidence at protein level"/>
<keyword id="KW-1003">Cell membrane</keyword>
<keyword id="KW-0966">Cell projection</keyword>
<keyword id="KW-0145">Chemotaxis</keyword>
<keyword id="KW-0217">Developmental protein</keyword>
<keyword id="KW-0221">Differentiation</keyword>
<keyword id="KW-1015">Disulfide bond</keyword>
<keyword id="KW-0325">Glycoprotein</keyword>
<keyword id="KW-0393">Immunoglobulin domain</keyword>
<keyword id="KW-0472">Membrane</keyword>
<keyword id="KW-0524">Neurogenesis</keyword>
<keyword id="KW-0597">Phosphoprotein</keyword>
<keyword id="KW-0675">Receptor</keyword>
<keyword id="KW-1185">Reference proteome</keyword>
<keyword id="KW-0677">Repeat</keyword>
<keyword id="KW-0732">Signal</keyword>
<keyword id="KW-0812">Transmembrane</keyword>
<keyword id="KW-1133">Transmembrane helix</keyword>
<keyword id="KW-0832">Ubl conjugation</keyword>